<protein>
    <recommendedName>
        <fullName evidence="3">Protein S40-1</fullName>
        <shortName evidence="3">AtS40-1</shortName>
    </recommendedName>
</protein>
<reference key="1">
    <citation type="journal article" date="2000" name="Nature">
        <title>Sequence and analysis of chromosome 1 of the plant Arabidopsis thaliana.</title>
        <authorList>
            <person name="Theologis A."/>
            <person name="Ecker J.R."/>
            <person name="Palm C.J."/>
            <person name="Federspiel N.A."/>
            <person name="Kaul S."/>
            <person name="White O."/>
            <person name="Alonso J."/>
            <person name="Altafi H."/>
            <person name="Araujo R."/>
            <person name="Bowman C.L."/>
            <person name="Brooks S.Y."/>
            <person name="Buehler E."/>
            <person name="Chan A."/>
            <person name="Chao Q."/>
            <person name="Chen H."/>
            <person name="Cheuk R.F."/>
            <person name="Chin C.W."/>
            <person name="Chung M.K."/>
            <person name="Conn L."/>
            <person name="Conway A.B."/>
            <person name="Conway A.R."/>
            <person name="Creasy T.H."/>
            <person name="Dewar K."/>
            <person name="Dunn P."/>
            <person name="Etgu P."/>
            <person name="Feldblyum T.V."/>
            <person name="Feng J.-D."/>
            <person name="Fong B."/>
            <person name="Fujii C.Y."/>
            <person name="Gill J.E."/>
            <person name="Goldsmith A.D."/>
            <person name="Haas B."/>
            <person name="Hansen N.F."/>
            <person name="Hughes B."/>
            <person name="Huizar L."/>
            <person name="Hunter J.L."/>
            <person name="Jenkins J."/>
            <person name="Johnson-Hopson C."/>
            <person name="Khan S."/>
            <person name="Khaykin E."/>
            <person name="Kim C.J."/>
            <person name="Koo H.L."/>
            <person name="Kremenetskaia I."/>
            <person name="Kurtz D.B."/>
            <person name="Kwan A."/>
            <person name="Lam B."/>
            <person name="Langin-Hooper S."/>
            <person name="Lee A."/>
            <person name="Lee J.M."/>
            <person name="Lenz C.A."/>
            <person name="Li J.H."/>
            <person name="Li Y.-P."/>
            <person name="Lin X."/>
            <person name="Liu S.X."/>
            <person name="Liu Z.A."/>
            <person name="Luros J.S."/>
            <person name="Maiti R."/>
            <person name="Marziali A."/>
            <person name="Militscher J."/>
            <person name="Miranda M."/>
            <person name="Nguyen M."/>
            <person name="Nierman W.C."/>
            <person name="Osborne B.I."/>
            <person name="Pai G."/>
            <person name="Peterson J."/>
            <person name="Pham P.K."/>
            <person name="Rizzo M."/>
            <person name="Rooney T."/>
            <person name="Rowley D."/>
            <person name="Sakano H."/>
            <person name="Salzberg S.L."/>
            <person name="Schwartz J.R."/>
            <person name="Shinn P."/>
            <person name="Southwick A.M."/>
            <person name="Sun H."/>
            <person name="Tallon L.J."/>
            <person name="Tambunga G."/>
            <person name="Toriumi M.J."/>
            <person name="Town C.D."/>
            <person name="Utterback T."/>
            <person name="Van Aken S."/>
            <person name="Vaysberg M."/>
            <person name="Vysotskaia V.S."/>
            <person name="Walker M."/>
            <person name="Wu D."/>
            <person name="Yu G."/>
            <person name="Fraser C.M."/>
            <person name="Venter J.C."/>
            <person name="Davis R.W."/>
        </authorList>
    </citation>
    <scope>NUCLEOTIDE SEQUENCE [LARGE SCALE GENOMIC DNA]</scope>
    <source>
        <strain>cv. Columbia</strain>
    </source>
</reference>
<reference key="2">
    <citation type="journal article" date="2017" name="Plant J.">
        <title>Araport11: a complete reannotation of the Arabidopsis thaliana reference genome.</title>
        <authorList>
            <person name="Cheng C.Y."/>
            <person name="Krishnakumar V."/>
            <person name="Chan A.P."/>
            <person name="Thibaud-Nissen F."/>
            <person name="Schobel S."/>
            <person name="Town C.D."/>
        </authorList>
    </citation>
    <scope>GENOME REANNOTATION</scope>
    <source>
        <strain>cv. Columbia</strain>
    </source>
</reference>
<reference key="3">
    <citation type="journal article" date="2003" name="Science">
        <title>Empirical analysis of transcriptional activity in the Arabidopsis genome.</title>
        <authorList>
            <person name="Yamada K."/>
            <person name="Lim J."/>
            <person name="Dale J.M."/>
            <person name="Chen H."/>
            <person name="Shinn P."/>
            <person name="Palm C.J."/>
            <person name="Southwick A.M."/>
            <person name="Wu H.C."/>
            <person name="Kim C.J."/>
            <person name="Nguyen M."/>
            <person name="Pham P.K."/>
            <person name="Cheuk R.F."/>
            <person name="Karlin-Newmann G."/>
            <person name="Liu S.X."/>
            <person name="Lam B."/>
            <person name="Sakano H."/>
            <person name="Wu T."/>
            <person name="Yu G."/>
            <person name="Miranda M."/>
            <person name="Quach H.L."/>
            <person name="Tripp M."/>
            <person name="Chang C.H."/>
            <person name="Lee J.M."/>
            <person name="Toriumi M.J."/>
            <person name="Chan M.M."/>
            <person name="Tang C.C."/>
            <person name="Onodera C.S."/>
            <person name="Deng J.M."/>
            <person name="Akiyama K."/>
            <person name="Ansari Y."/>
            <person name="Arakawa T."/>
            <person name="Banh J."/>
            <person name="Banno F."/>
            <person name="Bowser L."/>
            <person name="Brooks S.Y."/>
            <person name="Carninci P."/>
            <person name="Chao Q."/>
            <person name="Choy N."/>
            <person name="Enju A."/>
            <person name="Goldsmith A.D."/>
            <person name="Gurjal M."/>
            <person name="Hansen N.F."/>
            <person name="Hayashizaki Y."/>
            <person name="Johnson-Hopson C."/>
            <person name="Hsuan V.W."/>
            <person name="Iida K."/>
            <person name="Karnes M."/>
            <person name="Khan S."/>
            <person name="Koesema E."/>
            <person name="Ishida J."/>
            <person name="Jiang P.X."/>
            <person name="Jones T."/>
            <person name="Kawai J."/>
            <person name="Kamiya A."/>
            <person name="Meyers C."/>
            <person name="Nakajima M."/>
            <person name="Narusaka M."/>
            <person name="Seki M."/>
            <person name="Sakurai T."/>
            <person name="Satou M."/>
            <person name="Tamse R."/>
            <person name="Vaysberg M."/>
            <person name="Wallender E.K."/>
            <person name="Wong C."/>
            <person name="Yamamura Y."/>
            <person name="Yuan S."/>
            <person name="Shinozaki K."/>
            <person name="Davis R.W."/>
            <person name="Theologis A."/>
            <person name="Ecker J.R."/>
        </authorList>
    </citation>
    <scope>NUCLEOTIDE SEQUENCE [LARGE SCALE MRNA]</scope>
    <source>
        <strain>cv. Columbia</strain>
    </source>
</reference>
<reference key="4">
    <citation type="submission" date="2006-07" db="EMBL/GenBank/DDBJ databases">
        <title>Large-scale analysis of RIKEN Arabidopsis full-length (RAFL) cDNAs.</title>
        <authorList>
            <person name="Totoki Y."/>
            <person name="Seki M."/>
            <person name="Ishida J."/>
            <person name="Nakajima M."/>
            <person name="Enju A."/>
            <person name="Kamiya A."/>
            <person name="Narusaka M."/>
            <person name="Shin-i T."/>
            <person name="Nakagawa M."/>
            <person name="Sakamoto N."/>
            <person name="Oishi K."/>
            <person name="Kohara Y."/>
            <person name="Kobayashi M."/>
            <person name="Toyoda A."/>
            <person name="Sakaki Y."/>
            <person name="Sakurai T."/>
            <person name="Iida K."/>
            <person name="Akiyama K."/>
            <person name="Satou M."/>
            <person name="Toyoda T."/>
            <person name="Konagaya A."/>
            <person name="Carninci P."/>
            <person name="Kawai J."/>
            <person name="Hayashizaki Y."/>
            <person name="Shinozaki K."/>
        </authorList>
    </citation>
    <scope>NUCLEOTIDE SEQUENCE [LARGE SCALE MRNA]</scope>
    <source>
        <strain>cv. Columbia</strain>
    </source>
</reference>
<reference key="5">
    <citation type="journal article" date="2010" name="Plant Mol. Biol.">
        <title>Nuclear targeted AtS40 modulates senescence associated gene expression in Arabidopsis thaliana during natural development and in darkness.</title>
        <authorList>
            <person name="Fischer-Kilbienski I."/>
            <person name="Miao Y."/>
            <person name="Roitsch T."/>
            <person name="Zschiesche W."/>
            <person name="Humbeck K."/>
            <person name="Krupinska K."/>
        </authorList>
    </citation>
    <scope>INDUCTION BY DARK AND PATHOGENS</scope>
    <scope>DEVELOPMENTAL STAGE</scope>
    <scope>SUBCELLULAR LOCATION</scope>
    <scope>GENE FAMILY</scope>
    <scope>NOMENCLATURE</scope>
    <source>
        <strain>cv. Columbia</strain>
    </source>
</reference>
<keyword id="KW-0963">Cytoplasm</keyword>
<keyword id="KW-1185">Reference proteome</keyword>
<sequence length="140" mass="16038">MSEEFDESEIIFSDNYFPIRRREDGNEKENNRPVDFRENSERVWNKSSRRSKTTPLPSAVTAFSSSLPVNIPMRRYSTEEEYSDDDGGRKMIPPHLIVGRRMEGGQMAFSVCTGNGRTLKGRDLSRVRNSVLKLTGFLEA</sequence>
<comment type="subcellular location">
    <subcellularLocation>
        <location evidence="2">Cytoplasm</location>
    </subcellularLocation>
</comment>
<comment type="developmental stage">
    <text evidence="2">Accumulates during senescence.</text>
</comment>
<comment type="induction">
    <text evidence="2">Slightly induced by dark (PubMed:20238146). Triggered by pathogens such as Pseudomonas syringae pv. Tomato DC3000 (PubMed:20238146).</text>
</comment>
<comment type="similarity">
    <text evidence="4">Belongs to the senescence regulator S40 family.</text>
</comment>
<organism>
    <name type="scientific">Arabidopsis thaliana</name>
    <name type="common">Mouse-ear cress</name>
    <dbReference type="NCBI Taxonomy" id="3702"/>
    <lineage>
        <taxon>Eukaryota</taxon>
        <taxon>Viridiplantae</taxon>
        <taxon>Streptophyta</taxon>
        <taxon>Embryophyta</taxon>
        <taxon>Tracheophyta</taxon>
        <taxon>Spermatophyta</taxon>
        <taxon>Magnoliopsida</taxon>
        <taxon>eudicotyledons</taxon>
        <taxon>Gunneridae</taxon>
        <taxon>Pentapetalae</taxon>
        <taxon>rosids</taxon>
        <taxon>malvids</taxon>
        <taxon>Brassicales</taxon>
        <taxon>Brassicaceae</taxon>
        <taxon>Camelineae</taxon>
        <taxon>Arabidopsis</taxon>
    </lineage>
</organism>
<proteinExistence type="evidence at transcript level"/>
<feature type="chain" id="PRO_0000457289" description="Protein S40-1">
    <location>
        <begin position="1"/>
        <end position="140"/>
    </location>
</feature>
<feature type="region of interest" description="Disordered" evidence="1">
    <location>
        <begin position="16"/>
        <end position="58"/>
    </location>
</feature>
<feature type="compositionally biased region" description="Basic and acidic residues" evidence="1">
    <location>
        <begin position="20"/>
        <end position="44"/>
    </location>
</feature>
<accession>Q9C7N7</accession>
<evidence type="ECO:0000256" key="1">
    <source>
        <dbReference type="SAM" id="MobiDB-lite"/>
    </source>
</evidence>
<evidence type="ECO:0000269" key="2">
    <source>
    </source>
</evidence>
<evidence type="ECO:0000303" key="3">
    <source>
    </source>
</evidence>
<evidence type="ECO:0000305" key="4"/>
<evidence type="ECO:0000312" key="5">
    <source>
        <dbReference type="EMBL" id="AAG51753.1"/>
    </source>
</evidence>
<evidence type="ECO:0000312" key="6">
    <source>
        <dbReference type="EMBL" id="BAE99402.1"/>
    </source>
</evidence>
<gene>
    <name evidence="3" type="primary">S40-1</name>
    <name evidence="6" type="ordered locus">At1g29640</name>
    <name evidence="5" type="ORF">F15D2.20</name>
</gene>
<name>S401_ARATH</name>
<dbReference type="EMBL" id="AC068667">
    <property type="protein sequence ID" value="AAG51753.1"/>
    <property type="molecule type" value="Genomic_DNA"/>
</dbReference>
<dbReference type="EMBL" id="CP002684">
    <property type="protein sequence ID" value="AEE31114.1"/>
    <property type="molecule type" value="Genomic_DNA"/>
</dbReference>
<dbReference type="EMBL" id="BT004755">
    <property type="protein sequence ID" value="AAO44021.1"/>
    <property type="molecule type" value="mRNA"/>
</dbReference>
<dbReference type="EMBL" id="AK227398">
    <property type="protein sequence ID" value="BAE99402.1"/>
    <property type="molecule type" value="mRNA"/>
</dbReference>
<dbReference type="PIR" id="F86419">
    <property type="entry name" value="F86419"/>
</dbReference>
<dbReference type="RefSeq" id="NP_174257.1">
    <property type="nucleotide sequence ID" value="NM_102704.3"/>
</dbReference>
<dbReference type="FunCoup" id="Q9C7N7">
    <property type="interactions" value="47"/>
</dbReference>
<dbReference type="IntAct" id="Q9C7N7">
    <property type="interactions" value="4"/>
</dbReference>
<dbReference type="STRING" id="3702.Q9C7N7"/>
<dbReference type="PaxDb" id="3702-AT1G29640.1"/>
<dbReference type="ProteomicsDB" id="175623"/>
<dbReference type="EnsemblPlants" id="AT1G29640.1">
    <property type="protein sequence ID" value="AT1G29640.1"/>
    <property type="gene ID" value="AT1G29640"/>
</dbReference>
<dbReference type="GeneID" id="839841"/>
<dbReference type="Gramene" id="AT1G29640.1">
    <property type="protein sequence ID" value="AT1G29640.1"/>
    <property type="gene ID" value="AT1G29640"/>
</dbReference>
<dbReference type="KEGG" id="ath:AT1G29640"/>
<dbReference type="Araport" id="AT1G29640"/>
<dbReference type="TAIR" id="AT1G29640"/>
<dbReference type="eggNOG" id="ENOG502S431">
    <property type="taxonomic scope" value="Eukaryota"/>
</dbReference>
<dbReference type="HOGENOM" id="CLU_088831_2_0_1"/>
<dbReference type="InParanoid" id="Q9C7N7"/>
<dbReference type="OMA" id="PVNIPMR"/>
<dbReference type="OrthoDB" id="672058at2759"/>
<dbReference type="PRO" id="PR:Q9C7N7"/>
<dbReference type="Proteomes" id="UP000006548">
    <property type="component" value="Chromosome 1"/>
</dbReference>
<dbReference type="ExpressionAtlas" id="Q9C7N7">
    <property type="expression patterns" value="baseline and differential"/>
</dbReference>
<dbReference type="GO" id="GO:0005737">
    <property type="term" value="C:cytoplasm"/>
    <property type="evidence" value="ECO:0000314"/>
    <property type="project" value="UniProtKB"/>
</dbReference>
<dbReference type="GO" id="GO:0010150">
    <property type="term" value="P:leaf senescence"/>
    <property type="evidence" value="ECO:0000270"/>
    <property type="project" value="UniProtKB"/>
</dbReference>
<dbReference type="GO" id="GO:0009646">
    <property type="term" value="P:response to absence of light"/>
    <property type="evidence" value="ECO:0000270"/>
    <property type="project" value="UniProtKB"/>
</dbReference>
<dbReference type="GO" id="GO:0009617">
    <property type="term" value="P:response to bacterium"/>
    <property type="evidence" value="ECO:0000270"/>
    <property type="project" value="UniProtKB"/>
</dbReference>
<dbReference type="InterPro" id="IPR007608">
    <property type="entry name" value="Senescence_reg_S40"/>
</dbReference>
<dbReference type="PANTHER" id="PTHR33083">
    <property type="entry name" value="EXPRESSED PROTEIN"/>
    <property type="match status" value="1"/>
</dbReference>
<dbReference type="PANTHER" id="PTHR33083:SF83">
    <property type="entry name" value="PROTEIN S40-1"/>
    <property type="match status" value="1"/>
</dbReference>
<dbReference type="Pfam" id="PF04520">
    <property type="entry name" value="Senescence_reg"/>
    <property type="match status" value="1"/>
</dbReference>